<evidence type="ECO:0000250" key="1"/>
<evidence type="ECO:0000255" key="2"/>
<evidence type="ECO:0000255" key="3">
    <source>
        <dbReference type="PROSITE-ProRule" id="PRU01240"/>
    </source>
</evidence>
<evidence type="ECO:0000269" key="4">
    <source>
    </source>
</evidence>
<evidence type="ECO:0000305" key="5"/>
<comment type="function">
    <text evidence="1">Secreted subtilisin-like serine protease with keratinolytic activity that contributes to pathogenicity.</text>
</comment>
<comment type="subcellular location">
    <subcellularLocation>
        <location evidence="4">Secreted</location>
    </subcellularLocation>
</comment>
<comment type="similarity">
    <text evidence="5">Belongs to the peptidase S8 family.</text>
</comment>
<organism>
    <name type="scientific">Trichophyton tonsurans</name>
    <name type="common">Scalp ringworm fungus</name>
    <dbReference type="NCBI Taxonomy" id="34387"/>
    <lineage>
        <taxon>Eukaryota</taxon>
        <taxon>Fungi</taxon>
        <taxon>Dikarya</taxon>
        <taxon>Ascomycota</taxon>
        <taxon>Pezizomycotina</taxon>
        <taxon>Eurotiomycetes</taxon>
        <taxon>Eurotiomycetidae</taxon>
        <taxon>Onygenales</taxon>
        <taxon>Arthrodermataceae</taxon>
        <taxon>Trichophyton</taxon>
    </lineage>
</organism>
<feature type="signal peptide" evidence="2">
    <location>
        <begin position="1"/>
        <end position="20"/>
    </location>
</feature>
<feature type="propeptide" id="PRO_0000380826" evidence="1">
    <location>
        <begin position="21"/>
        <end position="119"/>
    </location>
</feature>
<feature type="chain" id="PRO_0000380827" description="Subtilisin-like protease 7">
    <location>
        <begin position="120"/>
        <end position="401"/>
    </location>
</feature>
<feature type="domain" description="Inhibitor I9" evidence="2">
    <location>
        <begin position="36"/>
        <end position="118"/>
    </location>
</feature>
<feature type="domain" description="Peptidase S8" evidence="3">
    <location>
        <begin position="129"/>
        <end position="401"/>
    </location>
</feature>
<feature type="active site" description="Charge relay system" evidence="3">
    <location>
        <position position="161"/>
    </location>
</feature>
<feature type="active site" description="Charge relay system" evidence="3">
    <location>
        <position position="193"/>
    </location>
</feature>
<feature type="active site" description="Charge relay system" evidence="3">
    <location>
        <position position="347"/>
    </location>
</feature>
<feature type="glycosylation site" description="N-linked (GlcNAc...) asparagine" evidence="2">
    <location>
        <position position="58"/>
    </location>
</feature>
<feature type="glycosylation site" description="N-linked (GlcNAc...) asparagine" evidence="2">
    <location>
        <position position="223"/>
    </location>
</feature>
<feature type="glycosylation site" description="N-linked (GlcNAc...) asparagine" evidence="2">
    <location>
        <position position="253"/>
    </location>
</feature>
<feature type="glycosylation site" description="N-linked (GlcNAc...) asparagine" evidence="2">
    <location>
        <position position="397"/>
    </location>
</feature>
<keyword id="KW-0325">Glycoprotein</keyword>
<keyword id="KW-0378">Hydrolase</keyword>
<keyword id="KW-0645">Protease</keyword>
<keyword id="KW-0964">Secreted</keyword>
<keyword id="KW-0720">Serine protease</keyword>
<keyword id="KW-0732">Signal</keyword>
<keyword id="KW-0843">Virulence</keyword>
<keyword id="KW-0865">Zymogen</keyword>
<name>SUB7_TRITO</name>
<gene>
    <name type="primary">SUB7</name>
</gene>
<dbReference type="EC" id="3.4.21.-"/>
<dbReference type="EMBL" id="DQ382273">
    <property type="protein sequence ID" value="ABD38559.1"/>
    <property type="molecule type" value="Genomic_DNA"/>
</dbReference>
<dbReference type="EMBL" id="FJ348241">
    <property type="protein sequence ID" value="ACL37331.1"/>
    <property type="molecule type" value="Genomic_DNA"/>
</dbReference>
<dbReference type="SMR" id="A1XIH4"/>
<dbReference type="GlyCosmos" id="A1XIH4">
    <property type="glycosylation" value="4 sites, No reported glycans"/>
</dbReference>
<dbReference type="VEuPathDB" id="FungiDB:TESG_06365"/>
<dbReference type="GO" id="GO:0005576">
    <property type="term" value="C:extracellular region"/>
    <property type="evidence" value="ECO:0007669"/>
    <property type="project" value="UniProtKB-SubCell"/>
</dbReference>
<dbReference type="GO" id="GO:0004252">
    <property type="term" value="F:serine-type endopeptidase activity"/>
    <property type="evidence" value="ECO:0007669"/>
    <property type="project" value="InterPro"/>
</dbReference>
<dbReference type="GO" id="GO:0006508">
    <property type="term" value="P:proteolysis"/>
    <property type="evidence" value="ECO:0007669"/>
    <property type="project" value="UniProtKB-KW"/>
</dbReference>
<dbReference type="CDD" id="cd04077">
    <property type="entry name" value="Peptidases_S8_PCSK9_ProteinaseK_like"/>
    <property type="match status" value="1"/>
</dbReference>
<dbReference type="FunFam" id="3.40.50.200:FF:000014">
    <property type="entry name" value="Proteinase K"/>
    <property type="match status" value="1"/>
</dbReference>
<dbReference type="Gene3D" id="3.30.70.80">
    <property type="entry name" value="Peptidase S8 propeptide/proteinase inhibitor I9"/>
    <property type="match status" value="1"/>
</dbReference>
<dbReference type="Gene3D" id="3.40.50.200">
    <property type="entry name" value="Peptidase S8/S53 domain"/>
    <property type="match status" value="1"/>
</dbReference>
<dbReference type="InterPro" id="IPR034193">
    <property type="entry name" value="PCSK9_ProteinaseK-like"/>
</dbReference>
<dbReference type="InterPro" id="IPR000209">
    <property type="entry name" value="Peptidase_S8/S53_dom"/>
</dbReference>
<dbReference type="InterPro" id="IPR036852">
    <property type="entry name" value="Peptidase_S8/S53_dom_sf"/>
</dbReference>
<dbReference type="InterPro" id="IPR022398">
    <property type="entry name" value="Peptidase_S8_His-AS"/>
</dbReference>
<dbReference type="InterPro" id="IPR023828">
    <property type="entry name" value="Peptidase_S8_Ser-AS"/>
</dbReference>
<dbReference type="InterPro" id="IPR050131">
    <property type="entry name" value="Peptidase_S8_subtilisin-like"/>
</dbReference>
<dbReference type="InterPro" id="IPR015500">
    <property type="entry name" value="Peptidase_S8_subtilisin-rel"/>
</dbReference>
<dbReference type="InterPro" id="IPR010259">
    <property type="entry name" value="S8pro/Inhibitor_I9"/>
</dbReference>
<dbReference type="InterPro" id="IPR037045">
    <property type="entry name" value="S8pro/Inhibitor_I9_sf"/>
</dbReference>
<dbReference type="PANTHER" id="PTHR43806:SF11">
    <property type="entry name" value="CEREVISIN-RELATED"/>
    <property type="match status" value="1"/>
</dbReference>
<dbReference type="PANTHER" id="PTHR43806">
    <property type="entry name" value="PEPTIDASE S8"/>
    <property type="match status" value="1"/>
</dbReference>
<dbReference type="Pfam" id="PF05922">
    <property type="entry name" value="Inhibitor_I9"/>
    <property type="match status" value="1"/>
</dbReference>
<dbReference type="Pfam" id="PF00082">
    <property type="entry name" value="Peptidase_S8"/>
    <property type="match status" value="1"/>
</dbReference>
<dbReference type="PRINTS" id="PR00723">
    <property type="entry name" value="SUBTILISIN"/>
</dbReference>
<dbReference type="SUPFAM" id="SSF54897">
    <property type="entry name" value="Protease propeptides/inhibitors"/>
    <property type="match status" value="1"/>
</dbReference>
<dbReference type="SUPFAM" id="SSF52743">
    <property type="entry name" value="Subtilisin-like"/>
    <property type="match status" value="1"/>
</dbReference>
<dbReference type="PROSITE" id="PS51892">
    <property type="entry name" value="SUBTILASE"/>
    <property type="match status" value="1"/>
</dbReference>
<dbReference type="PROSITE" id="PS00137">
    <property type="entry name" value="SUBTILASE_HIS"/>
    <property type="match status" value="1"/>
</dbReference>
<dbReference type="PROSITE" id="PS00138">
    <property type="entry name" value="SUBTILASE_SER"/>
    <property type="match status" value="1"/>
</dbReference>
<reference key="1">
    <citation type="journal article" date="2007" name="FEMS Microbiol. Lett.">
        <title>Closely related dermatophyte species produce different patterns of secreted proteins.</title>
        <authorList>
            <person name="Giddey K."/>
            <person name="Favre B."/>
            <person name="Quadroni M."/>
            <person name="Monod M."/>
        </authorList>
    </citation>
    <scope>NUCLEOTIDE SEQUENCE [GENOMIC DNA]</scope>
    <scope>IDENTIFICATION BY MASS SPECTROMETRY</scope>
    <scope>SUBCELLULAR LOCATION</scope>
    <source>
        <strain>LAU 704</strain>
    </source>
</reference>
<reference key="2">
    <citation type="submission" date="2008-10" db="EMBL/GenBank/DDBJ databases">
        <title>Comparing putative pathogenicity factors between Trichophyton tonsurans and Trichophyton equinum.</title>
        <authorList>
            <person name="Preuett B.L."/>
            <person name="Abdel-Rahman S.M."/>
        </authorList>
    </citation>
    <scope>NUCLEOTIDE SEQUENCE [GENOMIC DNA]</scope>
</reference>
<accession>A1XIH4</accession>
<proteinExistence type="evidence at protein level"/>
<protein>
    <recommendedName>
        <fullName>Subtilisin-like protease 7</fullName>
        <ecNumber>3.4.21.-</ecNumber>
    </recommendedName>
</protein>
<sequence>MGFITKAIPLALAAASVINGAEILETRAGVQTLADKYIVVMNDGMSDKDFDSHRSWVNRTHRRRLIRRGAKAMGGMKYTYNFPTGLKGYSGHFDEQMIKEISKRADVKYIERDARVQINAIEQQDNVPSWGLARVGSREPGGTTYYYDSTAGEGTTAYIIDTGTDIQHEEFDGGRATWGENFVDDMDMDCNGHGTHVSGTVGGRTFGVAKKSNIVAVKVLDCNGSGSNSGVIMGMQWATEDAQSKGADKAVVNMSLGGAFSQTSNDAAKAIAEGGVFLAVAAGNDNVDAAEASPASEPSICTVAASTEQDGKADFSNFGQVVDVYAPGDGITSAKPGGGSQVLSGTSMASPHVAGLAAYLIGLGKGGGPQLCDTIKQMAIDVIQNPGSSTTSKLINNGSGM</sequence>